<feature type="chain" id="PRO_0000093709" description="Inosine-5'-monophosphate dehydrogenase">
    <location>
        <begin position="1"/>
        <end position="488"/>
    </location>
</feature>
<feature type="domain" description="CBS 1" evidence="1">
    <location>
        <begin position="95"/>
        <end position="153"/>
    </location>
</feature>
<feature type="domain" description="CBS 2" evidence="1">
    <location>
        <begin position="157"/>
        <end position="216"/>
    </location>
</feature>
<feature type="region of interest" description="Disordered" evidence="2">
    <location>
        <begin position="468"/>
        <end position="488"/>
    </location>
</feature>
<feature type="compositionally biased region" description="Polar residues" evidence="2">
    <location>
        <begin position="475"/>
        <end position="488"/>
    </location>
</feature>
<feature type="active site" description="Thioimidate intermediate" evidence="1">
    <location>
        <position position="307"/>
    </location>
</feature>
<feature type="active site" description="Proton acceptor" evidence="1">
    <location>
        <position position="403"/>
    </location>
</feature>
<feature type="binding site" evidence="1">
    <location>
        <position position="250"/>
    </location>
    <ligand>
        <name>NAD(+)</name>
        <dbReference type="ChEBI" id="CHEBI:57540"/>
    </ligand>
</feature>
<feature type="binding site" evidence="1">
    <location>
        <begin position="300"/>
        <end position="302"/>
    </location>
    <ligand>
        <name>NAD(+)</name>
        <dbReference type="ChEBI" id="CHEBI:57540"/>
    </ligand>
</feature>
<feature type="binding site" description="in other chain" evidence="1">
    <location>
        <position position="302"/>
    </location>
    <ligand>
        <name>K(+)</name>
        <dbReference type="ChEBI" id="CHEBI:29103"/>
        <note>ligand shared between two tetrameric partners</note>
    </ligand>
</feature>
<feature type="binding site" description="in other chain" evidence="1">
    <location>
        <position position="304"/>
    </location>
    <ligand>
        <name>K(+)</name>
        <dbReference type="ChEBI" id="CHEBI:29103"/>
        <note>ligand shared between two tetrameric partners</note>
    </ligand>
</feature>
<feature type="binding site" evidence="1">
    <location>
        <position position="305"/>
    </location>
    <ligand>
        <name>IMP</name>
        <dbReference type="ChEBI" id="CHEBI:58053"/>
    </ligand>
</feature>
<feature type="binding site" description="in other chain" evidence="1">
    <location>
        <position position="307"/>
    </location>
    <ligand>
        <name>K(+)</name>
        <dbReference type="ChEBI" id="CHEBI:29103"/>
        <note>ligand shared between two tetrameric partners</note>
    </ligand>
</feature>
<feature type="binding site" evidence="1">
    <location>
        <begin position="340"/>
        <end position="342"/>
    </location>
    <ligand>
        <name>IMP</name>
        <dbReference type="ChEBI" id="CHEBI:58053"/>
    </ligand>
</feature>
<feature type="binding site" evidence="1">
    <location>
        <begin position="363"/>
        <end position="364"/>
    </location>
    <ligand>
        <name>IMP</name>
        <dbReference type="ChEBI" id="CHEBI:58053"/>
    </ligand>
</feature>
<feature type="binding site" evidence="1">
    <location>
        <begin position="387"/>
        <end position="391"/>
    </location>
    <ligand>
        <name>IMP</name>
        <dbReference type="ChEBI" id="CHEBI:58053"/>
    </ligand>
</feature>
<feature type="binding site" evidence="1">
    <location>
        <position position="417"/>
    </location>
    <ligand>
        <name>IMP</name>
        <dbReference type="ChEBI" id="CHEBI:58053"/>
    </ligand>
</feature>
<feature type="binding site" evidence="1">
    <location>
        <position position="471"/>
    </location>
    <ligand>
        <name>K(+)</name>
        <dbReference type="ChEBI" id="CHEBI:29103"/>
        <note>ligand shared between two tetrameric partners</note>
    </ligand>
</feature>
<feature type="binding site" evidence="1">
    <location>
        <position position="472"/>
    </location>
    <ligand>
        <name>K(+)</name>
        <dbReference type="ChEBI" id="CHEBI:29103"/>
        <note>ligand shared between two tetrameric partners</note>
    </ligand>
</feature>
<feature type="binding site" evidence="1">
    <location>
        <position position="473"/>
    </location>
    <ligand>
        <name>K(+)</name>
        <dbReference type="ChEBI" id="CHEBI:29103"/>
        <note>ligand shared between two tetrameric partners</note>
    </ligand>
</feature>
<accession>Q6GJQ7</accession>
<evidence type="ECO:0000255" key="1">
    <source>
        <dbReference type="HAMAP-Rule" id="MF_01964"/>
    </source>
</evidence>
<evidence type="ECO:0000256" key="2">
    <source>
        <dbReference type="SAM" id="MobiDB-lite"/>
    </source>
</evidence>
<organism>
    <name type="scientific">Staphylococcus aureus (strain MRSA252)</name>
    <dbReference type="NCBI Taxonomy" id="282458"/>
    <lineage>
        <taxon>Bacteria</taxon>
        <taxon>Bacillati</taxon>
        <taxon>Bacillota</taxon>
        <taxon>Bacilli</taxon>
        <taxon>Bacillales</taxon>
        <taxon>Staphylococcaceae</taxon>
        <taxon>Staphylococcus</taxon>
    </lineage>
</organism>
<proteinExistence type="inferred from homology"/>
<comment type="function">
    <text evidence="1">Catalyzes the conversion of inosine 5'-phosphate (IMP) to xanthosine 5'-phosphate (XMP), the first committed and rate-limiting step in the de novo synthesis of guanine nucleotides, and therefore plays an important role in the regulation of cell growth.</text>
</comment>
<comment type="catalytic activity">
    <reaction evidence="1">
        <text>IMP + NAD(+) + H2O = XMP + NADH + H(+)</text>
        <dbReference type="Rhea" id="RHEA:11708"/>
        <dbReference type="ChEBI" id="CHEBI:15377"/>
        <dbReference type="ChEBI" id="CHEBI:15378"/>
        <dbReference type="ChEBI" id="CHEBI:57464"/>
        <dbReference type="ChEBI" id="CHEBI:57540"/>
        <dbReference type="ChEBI" id="CHEBI:57945"/>
        <dbReference type="ChEBI" id="CHEBI:58053"/>
        <dbReference type="EC" id="1.1.1.205"/>
    </reaction>
</comment>
<comment type="cofactor">
    <cofactor evidence="1">
        <name>K(+)</name>
        <dbReference type="ChEBI" id="CHEBI:29103"/>
    </cofactor>
</comment>
<comment type="activity regulation">
    <text evidence="1">Mycophenolic acid (MPA) is a non-competitive inhibitor that prevents formation of the closed enzyme conformation by binding to the same site as the amobile flap. In contrast, mizoribine monophosphate (MZP) is a competitive inhibitor that induces the closed conformation. MPA is a potent inhibitor of mammalian IMPDHs but a poor inhibitor of the bacterial enzymes. MZP is a more potent inhibitor of bacterial IMPDH.</text>
</comment>
<comment type="pathway">
    <text evidence="1">Purine metabolism; XMP biosynthesis via de novo pathway; XMP from IMP: step 1/1.</text>
</comment>
<comment type="subunit">
    <text evidence="1">Homotetramer.</text>
</comment>
<comment type="similarity">
    <text evidence="1">Belongs to the IMPDH/GMPR family.</text>
</comment>
<sequence length="488" mass="52851">MWESKFAKESLTFDDVLLIPAQSDILPKDVDLSVQLSDKVKLNIPVISAGMDTVTESKMAIAMARQGGLGVIHKNMGVEEQADEVQKVKRSENGVISNPFFLTPEESVYEAEALMGKYRISGVPIVDNKEDRNLVGILTNRDLRFIEDFSIKIVDVMTQENLITAPVNTTLEEAEKILQKHKIEKLPLVKDGRLEGLITIKDIEKVIEFPNAAKDEHGRLLVAAAIGISKDTDIRAQKLVEAGVDVLVIDTAHGHSKGVIDQVKHIKKTYPEITLVAGNVATAEATKDLFEAGADIVKVGIGPGSICTTRVVAGVGVPQITAIYDCATEARKHGKAIIADGGIKFSGDIIKALAAGGHAVMLGSLLAGTEESPGATEIFQGRQYKVYRGMGSLGAMEKGSNDRYFQEDKAPKKFVPEGIEGRTAYKGALQDTIYQLMGGVRAGMGYTGSHDLRELREEAQFTRMGPAGLAESHPHNIQITKESPNYSF</sequence>
<protein>
    <recommendedName>
        <fullName evidence="1">Inosine-5'-monophosphate dehydrogenase</fullName>
        <shortName evidence="1">IMP dehydrogenase</shortName>
        <shortName evidence="1">IMPD</shortName>
        <shortName evidence="1">IMPDH</shortName>
        <ecNumber evidence="1">1.1.1.205</ecNumber>
    </recommendedName>
</protein>
<dbReference type="EC" id="1.1.1.205" evidence="1"/>
<dbReference type="EMBL" id="BX571856">
    <property type="protein sequence ID" value="CAG39432.1"/>
    <property type="molecule type" value="Genomic_DNA"/>
</dbReference>
<dbReference type="RefSeq" id="WP_000264071.1">
    <property type="nucleotide sequence ID" value="NC_002952.2"/>
</dbReference>
<dbReference type="SMR" id="Q6GJQ7"/>
<dbReference type="GeneID" id="66838696"/>
<dbReference type="KEGG" id="sar:SAR0408"/>
<dbReference type="HOGENOM" id="CLU_022552_1_0_9"/>
<dbReference type="UniPathway" id="UPA00601">
    <property type="reaction ID" value="UER00295"/>
</dbReference>
<dbReference type="Proteomes" id="UP000000596">
    <property type="component" value="Chromosome"/>
</dbReference>
<dbReference type="GO" id="GO:0003938">
    <property type="term" value="F:IMP dehydrogenase activity"/>
    <property type="evidence" value="ECO:0007669"/>
    <property type="project" value="UniProtKB-UniRule"/>
</dbReference>
<dbReference type="GO" id="GO:0046872">
    <property type="term" value="F:metal ion binding"/>
    <property type="evidence" value="ECO:0007669"/>
    <property type="project" value="UniProtKB-UniRule"/>
</dbReference>
<dbReference type="GO" id="GO:0000166">
    <property type="term" value="F:nucleotide binding"/>
    <property type="evidence" value="ECO:0007669"/>
    <property type="project" value="UniProtKB-UniRule"/>
</dbReference>
<dbReference type="GO" id="GO:0006177">
    <property type="term" value="P:GMP biosynthetic process"/>
    <property type="evidence" value="ECO:0007669"/>
    <property type="project" value="UniProtKB-UniRule"/>
</dbReference>
<dbReference type="GO" id="GO:0006183">
    <property type="term" value="P:GTP biosynthetic process"/>
    <property type="evidence" value="ECO:0007669"/>
    <property type="project" value="TreeGrafter"/>
</dbReference>
<dbReference type="CDD" id="cd04601">
    <property type="entry name" value="CBS_pair_IMPDH"/>
    <property type="match status" value="1"/>
</dbReference>
<dbReference type="CDD" id="cd00381">
    <property type="entry name" value="IMPDH"/>
    <property type="match status" value="1"/>
</dbReference>
<dbReference type="FunFam" id="3.20.20.70:FF:000003">
    <property type="entry name" value="GMP reductase"/>
    <property type="match status" value="1"/>
</dbReference>
<dbReference type="Gene3D" id="3.20.20.70">
    <property type="entry name" value="Aldolase class I"/>
    <property type="match status" value="1"/>
</dbReference>
<dbReference type="HAMAP" id="MF_01964">
    <property type="entry name" value="IMPDH"/>
    <property type="match status" value="1"/>
</dbReference>
<dbReference type="InterPro" id="IPR013785">
    <property type="entry name" value="Aldolase_TIM"/>
</dbReference>
<dbReference type="InterPro" id="IPR000644">
    <property type="entry name" value="CBS_dom"/>
</dbReference>
<dbReference type="InterPro" id="IPR046342">
    <property type="entry name" value="CBS_dom_sf"/>
</dbReference>
<dbReference type="InterPro" id="IPR005990">
    <property type="entry name" value="IMP_DH"/>
</dbReference>
<dbReference type="InterPro" id="IPR015875">
    <property type="entry name" value="IMP_DH/GMP_Rdtase_CS"/>
</dbReference>
<dbReference type="InterPro" id="IPR001093">
    <property type="entry name" value="IMP_DH_GMPRt"/>
</dbReference>
<dbReference type="NCBIfam" id="TIGR01302">
    <property type="entry name" value="IMP_dehydrog"/>
    <property type="match status" value="1"/>
</dbReference>
<dbReference type="PANTHER" id="PTHR11911:SF111">
    <property type="entry name" value="INOSINE-5'-MONOPHOSPHATE DEHYDROGENASE"/>
    <property type="match status" value="1"/>
</dbReference>
<dbReference type="PANTHER" id="PTHR11911">
    <property type="entry name" value="INOSINE-5-MONOPHOSPHATE DEHYDROGENASE RELATED"/>
    <property type="match status" value="1"/>
</dbReference>
<dbReference type="Pfam" id="PF00571">
    <property type="entry name" value="CBS"/>
    <property type="match status" value="2"/>
</dbReference>
<dbReference type="Pfam" id="PF00478">
    <property type="entry name" value="IMPDH"/>
    <property type="match status" value="1"/>
</dbReference>
<dbReference type="PIRSF" id="PIRSF000130">
    <property type="entry name" value="IMPDH"/>
    <property type="match status" value="1"/>
</dbReference>
<dbReference type="SMART" id="SM00116">
    <property type="entry name" value="CBS"/>
    <property type="match status" value="2"/>
</dbReference>
<dbReference type="SMART" id="SM01240">
    <property type="entry name" value="IMPDH"/>
    <property type="match status" value="1"/>
</dbReference>
<dbReference type="SUPFAM" id="SSF54631">
    <property type="entry name" value="CBS-domain pair"/>
    <property type="match status" value="1"/>
</dbReference>
<dbReference type="SUPFAM" id="SSF51412">
    <property type="entry name" value="Inosine monophosphate dehydrogenase (IMPDH)"/>
    <property type="match status" value="1"/>
</dbReference>
<dbReference type="PROSITE" id="PS51371">
    <property type="entry name" value="CBS"/>
    <property type="match status" value="2"/>
</dbReference>
<dbReference type="PROSITE" id="PS00487">
    <property type="entry name" value="IMP_DH_GMP_RED"/>
    <property type="match status" value="1"/>
</dbReference>
<name>IMDH_STAAR</name>
<keyword id="KW-0129">CBS domain</keyword>
<keyword id="KW-0332">GMP biosynthesis</keyword>
<keyword id="KW-0479">Metal-binding</keyword>
<keyword id="KW-0520">NAD</keyword>
<keyword id="KW-0560">Oxidoreductase</keyword>
<keyword id="KW-0630">Potassium</keyword>
<keyword id="KW-0658">Purine biosynthesis</keyword>
<keyword id="KW-0677">Repeat</keyword>
<gene>
    <name evidence="1" type="primary">guaB</name>
    <name type="ordered locus">SAR0408</name>
</gene>
<reference key="1">
    <citation type="journal article" date="2004" name="Proc. Natl. Acad. Sci. U.S.A.">
        <title>Complete genomes of two clinical Staphylococcus aureus strains: evidence for the rapid evolution of virulence and drug resistance.</title>
        <authorList>
            <person name="Holden M.T.G."/>
            <person name="Feil E.J."/>
            <person name="Lindsay J.A."/>
            <person name="Peacock S.J."/>
            <person name="Day N.P.J."/>
            <person name="Enright M.C."/>
            <person name="Foster T.J."/>
            <person name="Moore C.E."/>
            <person name="Hurst L."/>
            <person name="Atkin R."/>
            <person name="Barron A."/>
            <person name="Bason N."/>
            <person name="Bentley S.D."/>
            <person name="Chillingworth C."/>
            <person name="Chillingworth T."/>
            <person name="Churcher C."/>
            <person name="Clark L."/>
            <person name="Corton C."/>
            <person name="Cronin A."/>
            <person name="Doggett J."/>
            <person name="Dowd L."/>
            <person name="Feltwell T."/>
            <person name="Hance Z."/>
            <person name="Harris B."/>
            <person name="Hauser H."/>
            <person name="Holroyd S."/>
            <person name="Jagels K."/>
            <person name="James K.D."/>
            <person name="Lennard N."/>
            <person name="Line A."/>
            <person name="Mayes R."/>
            <person name="Moule S."/>
            <person name="Mungall K."/>
            <person name="Ormond D."/>
            <person name="Quail M.A."/>
            <person name="Rabbinowitsch E."/>
            <person name="Rutherford K.M."/>
            <person name="Sanders M."/>
            <person name="Sharp S."/>
            <person name="Simmonds M."/>
            <person name="Stevens K."/>
            <person name="Whitehead S."/>
            <person name="Barrell B.G."/>
            <person name="Spratt B.G."/>
            <person name="Parkhill J."/>
        </authorList>
    </citation>
    <scope>NUCLEOTIDE SEQUENCE [LARGE SCALE GENOMIC DNA]</scope>
    <source>
        <strain>MRSA252</strain>
    </source>
</reference>